<dbReference type="EMBL" id="J00402">
    <property type="protein sequence ID" value="AAA39652.1"/>
    <property type="molecule type" value="mRNA"/>
</dbReference>
<dbReference type="EMBL" id="L36065">
    <property type="protein sequence ID" value="AAA89205.1"/>
    <property type="molecule type" value="mRNA"/>
</dbReference>
<dbReference type="EMBL" id="U47329">
    <property type="protein sequence ID" value="AAB17607.1"/>
    <property type="molecule type" value="mRNA"/>
</dbReference>
<dbReference type="PIR" id="A90977">
    <property type="entry name" value="HLMSKD"/>
</dbReference>
<dbReference type="PDB" id="1VGK">
    <property type="method" value="X-ray"/>
    <property type="resolution" value="2.06 A"/>
    <property type="chains" value="A=22-295"/>
</dbReference>
<dbReference type="PDB" id="2FWO">
    <property type="method" value="X-ray"/>
    <property type="resolution" value="2.60 A"/>
    <property type="chains" value="A=22-304"/>
</dbReference>
<dbReference type="PDB" id="3NWM">
    <property type="method" value="X-ray"/>
    <property type="resolution" value="2.70 A"/>
    <property type="chains" value="A=22-295"/>
</dbReference>
<dbReference type="PDB" id="4WDI">
    <property type="method" value="X-ray"/>
    <property type="resolution" value="2.31 A"/>
    <property type="chains" value="A/D=22-296"/>
</dbReference>
<dbReference type="PDB" id="4Z76">
    <property type="method" value="X-ray"/>
    <property type="resolution" value="1.88 A"/>
    <property type="chains" value="A/D=22-296"/>
</dbReference>
<dbReference type="PDB" id="4Z77">
    <property type="method" value="X-ray"/>
    <property type="resolution" value="1.85 A"/>
    <property type="chains" value="A/D=22-296"/>
</dbReference>
<dbReference type="PDB" id="4Z78">
    <property type="method" value="X-ray"/>
    <property type="resolution" value="2.30 A"/>
    <property type="chains" value="A/D/G=22-296"/>
</dbReference>
<dbReference type="PDB" id="5GR7">
    <property type="method" value="X-ray"/>
    <property type="resolution" value="2.40 A"/>
    <property type="chains" value="A=22-295"/>
</dbReference>
<dbReference type="PDB" id="5GSB">
    <property type="method" value="X-ray"/>
    <property type="resolution" value="1.80 A"/>
    <property type="chains" value="A=22-295"/>
</dbReference>
<dbReference type="PDB" id="5GSR">
    <property type="method" value="X-ray"/>
    <property type="resolution" value="2.20 A"/>
    <property type="chains" value="A/C=22-295"/>
</dbReference>
<dbReference type="PDB" id="5GSV">
    <property type="method" value="X-ray"/>
    <property type="resolution" value="2.00 A"/>
    <property type="chains" value="A=22-295"/>
</dbReference>
<dbReference type="PDB" id="5GSX">
    <property type="method" value="X-ray"/>
    <property type="resolution" value="2.50 A"/>
    <property type="chains" value="A/D=22-295"/>
</dbReference>
<dbReference type="PDB" id="5TRZ">
    <property type="method" value="X-ray"/>
    <property type="resolution" value="2.25 A"/>
    <property type="chains" value="A/C=23-297"/>
</dbReference>
<dbReference type="PDB" id="5TS1">
    <property type="method" value="X-ray"/>
    <property type="resolution" value="2.30 A"/>
    <property type="chains" value="A/C/E/G=23-297"/>
</dbReference>
<dbReference type="PDB" id="8D5J">
    <property type="method" value="X-ray"/>
    <property type="resolution" value="1.95 A"/>
    <property type="chains" value="A=22-295"/>
</dbReference>
<dbReference type="PDB" id="8D5K">
    <property type="method" value="X-ray"/>
    <property type="resolution" value="2.07 A"/>
    <property type="chains" value="A=22-295"/>
</dbReference>
<dbReference type="PDBsum" id="1VGK"/>
<dbReference type="PDBsum" id="2FWO"/>
<dbReference type="PDBsum" id="3NWM"/>
<dbReference type="PDBsum" id="4WDI"/>
<dbReference type="PDBsum" id="4Z76"/>
<dbReference type="PDBsum" id="4Z77"/>
<dbReference type="PDBsum" id="4Z78"/>
<dbReference type="PDBsum" id="5GR7"/>
<dbReference type="PDBsum" id="5GSB"/>
<dbReference type="PDBsum" id="5GSR"/>
<dbReference type="PDBsum" id="5GSV"/>
<dbReference type="PDBsum" id="5GSX"/>
<dbReference type="PDBsum" id="5TRZ"/>
<dbReference type="PDBsum" id="5TS1"/>
<dbReference type="PDBsum" id="8D5J"/>
<dbReference type="PDBsum" id="8D5K"/>
<dbReference type="SMR" id="P01902"/>
<dbReference type="IntAct" id="P01902">
    <property type="interactions" value="1"/>
</dbReference>
<dbReference type="GlyCosmos" id="P01902">
    <property type="glycosylation" value="3 sites, No reported glycans"/>
</dbReference>
<dbReference type="iPTMnet" id="P01902"/>
<dbReference type="PhosphoSitePlus" id="P01902"/>
<dbReference type="jPOST" id="P01902"/>
<dbReference type="ProteomicsDB" id="271381"/>
<dbReference type="AGR" id="MGI:95904"/>
<dbReference type="MGI" id="MGI:95904">
    <property type="gene designation" value="H2-K1"/>
</dbReference>
<dbReference type="ChiTaRS" id="H2-K1">
    <property type="organism name" value="mouse"/>
</dbReference>
<dbReference type="EvolutionaryTrace" id="P01902"/>
<dbReference type="Proteomes" id="UP000000589">
    <property type="component" value="Unplaced"/>
</dbReference>
<dbReference type="GO" id="GO:0009897">
    <property type="term" value="C:external side of plasma membrane"/>
    <property type="evidence" value="ECO:0000314"/>
    <property type="project" value="MGI"/>
</dbReference>
<dbReference type="GO" id="GO:0098553">
    <property type="term" value="C:lumenal side of endoplasmic reticulum membrane"/>
    <property type="evidence" value="ECO:0000304"/>
    <property type="project" value="Reactome"/>
</dbReference>
<dbReference type="GO" id="GO:0042612">
    <property type="term" value="C:MHC class I protein complex"/>
    <property type="evidence" value="ECO:0007669"/>
    <property type="project" value="UniProtKB-KW"/>
</dbReference>
<dbReference type="GO" id="GO:0030670">
    <property type="term" value="C:phagocytic vesicle membrane"/>
    <property type="evidence" value="ECO:0000304"/>
    <property type="project" value="Reactome"/>
</dbReference>
<dbReference type="GO" id="GO:0042288">
    <property type="term" value="F:MHC class I protein binding"/>
    <property type="evidence" value="ECO:0000353"/>
    <property type="project" value="MGI"/>
</dbReference>
<dbReference type="GO" id="GO:0042605">
    <property type="term" value="F:peptide antigen binding"/>
    <property type="evidence" value="ECO:0000314"/>
    <property type="project" value="MGI"/>
</dbReference>
<dbReference type="GO" id="GO:0002485">
    <property type="term" value="P:antigen processing and presentation of endogenous peptide antigen via MHC class I via ER pathway, TAP-dependent"/>
    <property type="evidence" value="ECO:0000314"/>
    <property type="project" value="MGI"/>
</dbReference>
<dbReference type="GO" id="GO:0042590">
    <property type="term" value="P:antigen processing and presentation of exogenous peptide antigen via MHC class I"/>
    <property type="evidence" value="ECO:0000314"/>
    <property type="project" value="MGI"/>
</dbReference>
<dbReference type="GO" id="GO:0042742">
    <property type="term" value="P:defense response to bacterium"/>
    <property type="evidence" value="ECO:0000314"/>
    <property type="project" value="MGI"/>
</dbReference>
<dbReference type="GO" id="GO:0048839">
    <property type="term" value="P:inner ear development"/>
    <property type="evidence" value="ECO:0000314"/>
    <property type="project" value="MGI"/>
</dbReference>
<dbReference type="GO" id="GO:0010977">
    <property type="term" value="P:negative regulation of neuron projection development"/>
    <property type="evidence" value="ECO:0000314"/>
    <property type="project" value="MGI"/>
</dbReference>
<dbReference type="GO" id="GO:0001916">
    <property type="term" value="P:positive regulation of T cell mediated cytotoxicity"/>
    <property type="evidence" value="ECO:0000314"/>
    <property type="project" value="MGI"/>
</dbReference>
<dbReference type="GO" id="GO:0001913">
    <property type="term" value="P:T cell mediated cytotoxicity"/>
    <property type="evidence" value="ECO:0000314"/>
    <property type="project" value="MGI"/>
</dbReference>
<dbReference type="FunFam" id="2.60.40.10:FF:000014">
    <property type="entry name" value="H-2 class I histocompatibility antigen, alpha chain"/>
    <property type="match status" value="1"/>
</dbReference>
<dbReference type="FunFam" id="3.30.500.10:FF:000001">
    <property type="entry name" value="H-2 class I histocompatibility antigen, alpha chain"/>
    <property type="match status" value="1"/>
</dbReference>
<dbReference type="Gene3D" id="2.60.40.10">
    <property type="entry name" value="Immunoglobulins"/>
    <property type="match status" value="1"/>
</dbReference>
<dbReference type="Gene3D" id="3.30.500.10">
    <property type="entry name" value="MHC class I-like antigen recognition-like"/>
    <property type="match status" value="1"/>
</dbReference>
<dbReference type="InterPro" id="IPR007110">
    <property type="entry name" value="Ig-like_dom"/>
</dbReference>
<dbReference type="InterPro" id="IPR036179">
    <property type="entry name" value="Ig-like_dom_sf"/>
</dbReference>
<dbReference type="InterPro" id="IPR013783">
    <property type="entry name" value="Ig-like_fold"/>
</dbReference>
<dbReference type="InterPro" id="IPR003006">
    <property type="entry name" value="Ig/MHC_CS"/>
</dbReference>
<dbReference type="InterPro" id="IPR003597">
    <property type="entry name" value="Ig_C1-set"/>
</dbReference>
<dbReference type="InterPro" id="IPR050208">
    <property type="entry name" value="MHC_class-I_related"/>
</dbReference>
<dbReference type="InterPro" id="IPR011161">
    <property type="entry name" value="MHC_I-like_Ag-recog"/>
</dbReference>
<dbReference type="InterPro" id="IPR037055">
    <property type="entry name" value="MHC_I-like_Ag-recog_sf"/>
</dbReference>
<dbReference type="InterPro" id="IPR011162">
    <property type="entry name" value="MHC_I/II-like_Ag-recog"/>
</dbReference>
<dbReference type="InterPro" id="IPR001039">
    <property type="entry name" value="MHC_I_a_a1/a2"/>
</dbReference>
<dbReference type="PANTHER" id="PTHR16675:SF251">
    <property type="entry name" value="HLA CLASS I HISTOCOMPATIBILITY ANTIGEN, C ALPHA CHAIN"/>
    <property type="match status" value="1"/>
</dbReference>
<dbReference type="PANTHER" id="PTHR16675">
    <property type="entry name" value="MHC CLASS I-RELATED"/>
    <property type="match status" value="1"/>
</dbReference>
<dbReference type="Pfam" id="PF07654">
    <property type="entry name" value="C1-set"/>
    <property type="match status" value="1"/>
</dbReference>
<dbReference type="Pfam" id="PF00129">
    <property type="entry name" value="MHC_I"/>
    <property type="match status" value="1"/>
</dbReference>
<dbReference type="PRINTS" id="PR01638">
    <property type="entry name" value="MHCCLASSI"/>
</dbReference>
<dbReference type="SMART" id="SM00407">
    <property type="entry name" value="IGc1"/>
    <property type="match status" value="1"/>
</dbReference>
<dbReference type="SUPFAM" id="SSF48726">
    <property type="entry name" value="Immunoglobulin"/>
    <property type="match status" value="1"/>
</dbReference>
<dbReference type="SUPFAM" id="SSF54452">
    <property type="entry name" value="MHC antigen-recognition domain"/>
    <property type="match status" value="1"/>
</dbReference>
<dbReference type="PROSITE" id="PS50835">
    <property type="entry name" value="IG_LIKE"/>
    <property type="match status" value="1"/>
</dbReference>
<dbReference type="PROSITE" id="PS00290">
    <property type="entry name" value="IG_MHC"/>
    <property type="match status" value="1"/>
</dbReference>
<protein>
    <recommendedName>
        <fullName>H-2 class I histocompatibility antigen, K-D alpha chain</fullName>
        <shortName>H-2K(D)</shortName>
    </recommendedName>
</protein>
<keyword id="KW-0002">3D-structure</keyword>
<keyword id="KW-0903">Direct protein sequencing</keyword>
<keyword id="KW-1015">Disulfide bond</keyword>
<keyword id="KW-0325">Glycoprotein</keyword>
<keyword id="KW-0391">Immunity</keyword>
<keyword id="KW-0472">Membrane</keyword>
<keyword id="KW-0490">MHC I</keyword>
<keyword id="KW-0597">Phosphoprotein</keyword>
<keyword id="KW-1185">Reference proteome</keyword>
<keyword id="KW-0732">Signal</keyword>
<keyword id="KW-0812">Transmembrane</keyword>
<keyword id="KW-1133">Transmembrane helix</keyword>
<accession>P01902</accession>
<name>HA1D_MOUSE</name>
<feature type="signal peptide" evidence="5">
    <location>
        <begin position="1"/>
        <end position="21"/>
    </location>
</feature>
<feature type="chain" id="PRO_0000018929" description="H-2 class I histocompatibility antigen, K-D alpha chain">
    <location>
        <begin position="22"/>
        <end position="368"/>
    </location>
</feature>
<feature type="topological domain" description="Extracellular" evidence="1">
    <location>
        <begin position="22"/>
        <end position="305"/>
    </location>
</feature>
<feature type="transmembrane region" description="Helical" evidence="1">
    <location>
        <begin position="306"/>
        <end position="328"/>
    </location>
</feature>
<feature type="topological domain" description="Cytoplasmic" evidence="1">
    <location>
        <begin position="329"/>
        <end position="368"/>
    </location>
</feature>
<feature type="domain" description="Ig-like C1-type">
    <location>
        <begin position="206"/>
        <end position="294"/>
    </location>
</feature>
<feature type="region of interest" description="Alpha-1">
    <location>
        <begin position="22"/>
        <end position="111"/>
    </location>
</feature>
<feature type="region of interest" description="Alpha-2">
    <location>
        <begin position="112"/>
        <end position="203"/>
    </location>
</feature>
<feature type="region of interest" description="Alpha-3">
    <location>
        <begin position="204"/>
        <end position="295"/>
    </location>
</feature>
<feature type="region of interest" description="Connecting peptide">
    <location>
        <begin position="296"/>
        <end position="305"/>
    </location>
</feature>
<feature type="modified residue" description="Phosphoserine" evidence="9">
    <location>
        <position position="350"/>
    </location>
</feature>
<feature type="modified residue" description="Phosphoserine" evidence="8 9">
    <location>
        <position position="353"/>
    </location>
</feature>
<feature type="glycosylation site" description="N-linked (GlcNAc...) asparagine" evidence="3 4">
    <location>
        <position position="107"/>
    </location>
</feature>
<feature type="glycosylation site" description="N-linked (GlcNAc...) asparagine" evidence="1 6">
    <location>
        <position position="197"/>
    </location>
</feature>
<feature type="glycosylation site" description="N-linked (GlcNAc...) asparagine" evidence="3">
    <location>
        <position position="277"/>
    </location>
</feature>
<feature type="disulfide bond" evidence="2">
    <location>
        <begin position="122"/>
        <end position="185"/>
    </location>
</feature>
<feature type="disulfide bond" evidence="2">
    <location>
        <begin position="224"/>
        <end position="280"/>
    </location>
</feature>
<feature type="sequence conflict" description="In Ref. 2; AAA39652." evidence="7" ref="2">
    <original>Q</original>
    <variation>H</variation>
    <location>
        <position position="135"/>
    </location>
</feature>
<feature type="strand" evidence="12">
    <location>
        <begin position="24"/>
        <end position="35"/>
    </location>
</feature>
<feature type="turn" evidence="12">
    <location>
        <begin position="36"/>
        <end position="38"/>
    </location>
</feature>
<feature type="strand" evidence="12">
    <location>
        <begin position="39"/>
        <end position="49"/>
    </location>
</feature>
<feature type="strand" evidence="12">
    <location>
        <begin position="52"/>
        <end position="58"/>
    </location>
</feature>
<feature type="strand" evidence="12">
    <location>
        <begin position="61"/>
        <end position="63"/>
    </location>
</feature>
<feature type="strand" evidence="12">
    <location>
        <begin position="67"/>
        <end position="70"/>
    </location>
</feature>
<feature type="helix" evidence="12">
    <location>
        <begin position="71"/>
        <end position="73"/>
    </location>
</feature>
<feature type="helix" evidence="12">
    <location>
        <begin position="78"/>
        <end position="105"/>
    </location>
</feature>
<feature type="strand" evidence="14">
    <location>
        <begin position="110"/>
        <end position="112"/>
    </location>
</feature>
<feature type="strand" evidence="12">
    <location>
        <begin position="115"/>
        <end position="124"/>
    </location>
</feature>
<feature type="strand" evidence="12">
    <location>
        <begin position="129"/>
        <end position="139"/>
    </location>
</feature>
<feature type="strand" evidence="12">
    <location>
        <begin position="142"/>
        <end position="147"/>
    </location>
</feature>
<feature type="strand" evidence="12">
    <location>
        <begin position="154"/>
        <end position="158"/>
    </location>
</feature>
<feature type="helix" evidence="12">
    <location>
        <begin position="159"/>
        <end position="171"/>
    </location>
</feature>
<feature type="helix" evidence="12">
    <location>
        <begin position="173"/>
        <end position="182"/>
    </location>
</feature>
<feature type="helix" evidence="12">
    <location>
        <begin position="184"/>
        <end position="195"/>
    </location>
</feature>
<feature type="helix" evidence="12">
    <location>
        <begin position="197"/>
        <end position="200"/>
    </location>
</feature>
<feature type="strand" evidence="11">
    <location>
        <begin position="202"/>
        <end position="204"/>
    </location>
</feature>
<feature type="strand" evidence="12">
    <location>
        <begin position="207"/>
        <end position="214"/>
    </location>
</feature>
<feature type="strand" evidence="12">
    <location>
        <begin position="216"/>
        <end position="232"/>
    </location>
</feature>
<feature type="strand" evidence="12">
    <location>
        <begin position="235"/>
        <end position="240"/>
    </location>
</feature>
<feature type="strand" evidence="13">
    <location>
        <begin position="243"/>
        <end position="245"/>
    </location>
</feature>
<feature type="helix" evidence="11">
    <location>
        <begin position="246"/>
        <end position="248"/>
    </location>
</feature>
<feature type="strand" evidence="13">
    <location>
        <begin position="249"/>
        <end position="251"/>
    </location>
</feature>
<feature type="strand" evidence="12">
    <location>
        <begin position="258"/>
        <end position="260"/>
    </location>
</feature>
<feature type="strand" evidence="12">
    <location>
        <begin position="262"/>
        <end position="271"/>
    </location>
</feature>
<feature type="helix" evidence="12">
    <location>
        <begin position="275"/>
        <end position="277"/>
    </location>
</feature>
<feature type="strand" evidence="12">
    <location>
        <begin position="278"/>
        <end position="283"/>
    </location>
</feature>
<feature type="strand" evidence="10">
    <location>
        <begin position="287"/>
        <end position="289"/>
    </location>
</feature>
<feature type="strand" evidence="12">
    <location>
        <begin position="291"/>
        <end position="293"/>
    </location>
</feature>
<reference key="1">
    <citation type="journal article" date="1983" name="EMBO J.">
        <title>Mouse histocompatibility genes: structure and organisation of a Kd gene.</title>
        <authorList>
            <person name="Kvist S."/>
            <person name="Roberts L."/>
            <person name="Dobberstein B."/>
        </authorList>
    </citation>
    <scope>NUCLEOTIDE SEQUENCE [MRNA]</scope>
</reference>
<reference key="2">
    <citation type="journal article" date="1983" name="Nucleic Acids Res.">
        <title>A cDNA clone containing the entire coding sequence of a mouse H-2Kd histocompatibility antigen.</title>
        <authorList>
            <person name="Lalanne J.-L."/>
            <person name="Delarbre C."/>
            <person name="Gachelin G."/>
            <person name="Kourilsky P."/>
        </authorList>
    </citation>
    <scope>NUCLEOTIDE SEQUENCE [MRNA]</scope>
    <source>
        <strain>BALB/cJ</strain>
    </source>
</reference>
<reference key="3">
    <citation type="submission" date="1995-05" db="EMBL/GenBank/DDBJ databases">
        <authorList>
            <person name="Girgis K.R."/>
            <person name="Capra D.J."/>
            <person name="Stroynowski I."/>
        </authorList>
    </citation>
    <scope>NUCLEOTIDE SEQUENCE [MRNA]</scope>
    <source>
        <strain>NOD/LT</strain>
    </source>
</reference>
<reference key="4">
    <citation type="journal article" date="1996" name="Ann. Transplant.">
        <title>Nucleotide sequences of three H-2K and three H-2D complementary DNA clones coding mouse class I MHC heavy chain proteins.</title>
        <authorList>
            <person name="Wang M."/>
            <person name="Stepkowski S.M."/>
            <person name="Hebert J.S."/>
            <person name="Tian L."/>
            <person name="Yu J."/>
            <person name="Kahan B.D."/>
        </authorList>
    </citation>
    <scope>NUCLEOTIDE SEQUENCE [MRNA]</scope>
    <source>
        <strain>BALB/cJ</strain>
    </source>
</reference>
<reference key="5">
    <citation type="journal article" date="1981" name="Biochemistry">
        <title>Amino acid sequence of residues 1-98 of the K-2Kb murine major histocompatibility alloantigen: comparison with H-2Kb and H-2db reveals extensive localized differences.</title>
        <authorList>
            <person name="Kimball E.S."/>
            <person name="Nathenson S.G."/>
            <person name="Coligan J.E."/>
        </authorList>
    </citation>
    <scope>PROTEIN SEQUENCE OF 22-119</scope>
</reference>
<reference key="6">
    <citation type="journal article" date="1985" name="J. Biol. Chem.">
        <title>Oligosaccharide microheterogeneity of the murine major histocompatibility antigens. Reproducible site-specific patterns of sialylation and branching in asparagine-linked oligosaccharides.</title>
        <authorList>
            <person name="Swiedler S.J."/>
            <person name="Freed J.H."/>
            <person name="Tarentino A.L."/>
            <person name="Plummer T.H. Jr."/>
            <person name="Hart G.W."/>
        </authorList>
    </citation>
    <scope>GLYCOSYLATION AT ASN-107 AND ASN-277</scope>
</reference>
<reference key="7">
    <citation type="journal article" date="2007" name="Proc. Natl. Acad. Sci. U.S.A.">
        <title>Large-scale phosphorylation analysis of mouse liver.</title>
        <authorList>
            <person name="Villen J."/>
            <person name="Beausoleil S.A."/>
            <person name="Gerber S.A."/>
            <person name="Gygi S.P."/>
        </authorList>
    </citation>
    <scope>IDENTIFICATION BY MASS SPECTROMETRY [LARGE SCALE ANALYSIS]</scope>
    <source>
        <tissue>Liver</tissue>
    </source>
</reference>
<reference key="8">
    <citation type="journal article" date="2009" name="Immunity">
        <title>The phagosomal proteome in interferon-gamma-activated macrophages.</title>
        <authorList>
            <person name="Trost M."/>
            <person name="English L."/>
            <person name="Lemieux S."/>
            <person name="Courcelles M."/>
            <person name="Desjardins M."/>
            <person name="Thibault P."/>
        </authorList>
    </citation>
    <scope>PHOSPHORYLATION [LARGE SCALE ANALYSIS] AT SER-353</scope>
    <scope>IDENTIFICATION BY MASS SPECTROMETRY [LARGE SCALE ANALYSIS]</scope>
</reference>
<reference key="9">
    <citation type="journal article" date="2010" name="Cell">
        <title>A tissue-specific atlas of mouse protein phosphorylation and expression.</title>
        <authorList>
            <person name="Huttlin E.L."/>
            <person name="Jedrychowski M.P."/>
            <person name="Elias J.E."/>
            <person name="Goswami T."/>
            <person name="Rad R."/>
            <person name="Beausoleil S.A."/>
            <person name="Villen J."/>
            <person name="Haas W."/>
            <person name="Sowa M.E."/>
            <person name="Gygi S.P."/>
        </authorList>
    </citation>
    <scope>PHOSPHORYLATION [LARGE SCALE ANALYSIS] AT SER-350 AND SER-353</scope>
    <scope>IDENTIFICATION BY MASS SPECTROMETRY [LARGE SCALE ANALYSIS]</scope>
    <source>
        <tissue>Brown adipose tissue</tissue>
        <tissue>Heart</tissue>
        <tissue>Kidney</tissue>
        <tissue>Liver</tissue>
        <tissue>Lung</tissue>
        <tissue>Spleen</tissue>
        <tissue>Testis</tissue>
    </source>
</reference>
<gene>
    <name type="primary">H2-K1</name>
    <name type="synonym">H2-K</name>
</gene>
<organism>
    <name type="scientific">Mus musculus</name>
    <name type="common">Mouse</name>
    <dbReference type="NCBI Taxonomy" id="10090"/>
    <lineage>
        <taxon>Eukaryota</taxon>
        <taxon>Metazoa</taxon>
        <taxon>Chordata</taxon>
        <taxon>Craniata</taxon>
        <taxon>Vertebrata</taxon>
        <taxon>Euteleostomi</taxon>
        <taxon>Mammalia</taxon>
        <taxon>Eutheria</taxon>
        <taxon>Euarchontoglires</taxon>
        <taxon>Glires</taxon>
        <taxon>Rodentia</taxon>
        <taxon>Myomorpha</taxon>
        <taxon>Muroidea</taxon>
        <taxon>Muridae</taxon>
        <taxon>Murinae</taxon>
        <taxon>Mus</taxon>
        <taxon>Mus</taxon>
    </lineage>
</organism>
<sequence length="368" mass="41490">MAPCTLLLLLAAALAPTQTRAGPHSLRYFVTAVSRPGLGEPRFIAVGYVDDTQFVRFDSDADNPRFEPRAPWMEQEGPEYWEEQTQRAKSDEQWFRVSLRTAQRYYNQSKGGSHTFQRMFGCDVGSDWRLLRGYQQFAYDGRDYIALNEDLKTWTAADTAALITRRKWEQAGDAEYYRAYLEGECVEWLRRYLELGNETLLRTDSPKAHVTYHPRSQVDVTLRCWALGFYPADITLTWQLNGEDLTQDMELVETRPAGDGTFQKWAAVVVPLGKEQNYTCHVHHKGLPEPLTLRWKLPPSTVSNTVIIAVLVVLGAAIVTGAVVAFVMKMRRNTGGKGVNYALAPGSQTSDLSLPDGKVMVHDPHSLA</sequence>
<evidence type="ECO:0000255" key="1"/>
<evidence type="ECO:0000255" key="2">
    <source>
        <dbReference type="PROSITE-ProRule" id="PRU00114"/>
    </source>
</evidence>
<evidence type="ECO:0000269" key="3">
    <source>
    </source>
</evidence>
<evidence type="ECO:0000269" key="4">
    <source>
    </source>
</evidence>
<evidence type="ECO:0000269" key="5">
    <source>
    </source>
</evidence>
<evidence type="ECO:0000303" key="6">
    <source>
    </source>
</evidence>
<evidence type="ECO:0000305" key="7"/>
<evidence type="ECO:0007744" key="8">
    <source>
    </source>
</evidence>
<evidence type="ECO:0007744" key="9">
    <source>
    </source>
</evidence>
<evidence type="ECO:0007829" key="10">
    <source>
        <dbReference type="PDB" id="4Z76"/>
    </source>
</evidence>
<evidence type="ECO:0007829" key="11">
    <source>
        <dbReference type="PDB" id="4Z77"/>
    </source>
</evidence>
<evidence type="ECO:0007829" key="12">
    <source>
        <dbReference type="PDB" id="5GSB"/>
    </source>
</evidence>
<evidence type="ECO:0007829" key="13">
    <source>
        <dbReference type="PDB" id="5GSV"/>
    </source>
</evidence>
<evidence type="ECO:0007829" key="14">
    <source>
        <dbReference type="PDB" id="8D5J"/>
    </source>
</evidence>
<comment type="function">
    <text>Involved in the presentation of foreign antigens to the immune system.</text>
</comment>
<comment type="subunit">
    <text>Heterodimer of an alpha chain and a beta chain (beta-2-microglobulin).</text>
</comment>
<comment type="subcellular location">
    <subcellularLocation>
        <location>Membrane</location>
        <topology>Single-pass type I membrane protein</topology>
    </subcellularLocation>
</comment>
<comment type="similarity">
    <text evidence="7">Belongs to the MHC class I family.</text>
</comment>
<proteinExistence type="evidence at protein level"/>